<proteinExistence type="inferred from homology"/>
<comment type="function">
    <text evidence="1">Functions in the N-end rule pathway of protein degradation where it conjugates Leu, Phe and, less efficiently, Met from aminoacyl-tRNAs to the N-termini of proteins containing an N-terminal arginine or lysine.</text>
</comment>
<comment type="catalytic activity">
    <reaction evidence="1">
        <text>N-terminal L-lysyl-[protein] + L-leucyl-tRNA(Leu) = N-terminal L-leucyl-L-lysyl-[protein] + tRNA(Leu) + H(+)</text>
        <dbReference type="Rhea" id="RHEA:12340"/>
        <dbReference type="Rhea" id="RHEA-COMP:9613"/>
        <dbReference type="Rhea" id="RHEA-COMP:9622"/>
        <dbReference type="Rhea" id="RHEA-COMP:12670"/>
        <dbReference type="Rhea" id="RHEA-COMP:12671"/>
        <dbReference type="ChEBI" id="CHEBI:15378"/>
        <dbReference type="ChEBI" id="CHEBI:65249"/>
        <dbReference type="ChEBI" id="CHEBI:78442"/>
        <dbReference type="ChEBI" id="CHEBI:78494"/>
        <dbReference type="ChEBI" id="CHEBI:133043"/>
        <dbReference type="EC" id="2.3.2.6"/>
    </reaction>
</comment>
<comment type="catalytic activity">
    <reaction evidence="1">
        <text>N-terminal L-arginyl-[protein] + L-leucyl-tRNA(Leu) = N-terminal L-leucyl-L-arginyl-[protein] + tRNA(Leu) + H(+)</text>
        <dbReference type="Rhea" id="RHEA:50416"/>
        <dbReference type="Rhea" id="RHEA-COMP:9613"/>
        <dbReference type="Rhea" id="RHEA-COMP:9622"/>
        <dbReference type="Rhea" id="RHEA-COMP:12672"/>
        <dbReference type="Rhea" id="RHEA-COMP:12673"/>
        <dbReference type="ChEBI" id="CHEBI:15378"/>
        <dbReference type="ChEBI" id="CHEBI:64719"/>
        <dbReference type="ChEBI" id="CHEBI:78442"/>
        <dbReference type="ChEBI" id="CHEBI:78494"/>
        <dbReference type="ChEBI" id="CHEBI:133044"/>
        <dbReference type="EC" id="2.3.2.6"/>
    </reaction>
</comment>
<comment type="catalytic activity">
    <reaction evidence="1">
        <text>L-phenylalanyl-tRNA(Phe) + an N-terminal L-alpha-aminoacyl-[protein] = an N-terminal L-phenylalanyl-L-alpha-aminoacyl-[protein] + tRNA(Phe)</text>
        <dbReference type="Rhea" id="RHEA:43632"/>
        <dbReference type="Rhea" id="RHEA-COMP:9668"/>
        <dbReference type="Rhea" id="RHEA-COMP:9699"/>
        <dbReference type="Rhea" id="RHEA-COMP:10636"/>
        <dbReference type="Rhea" id="RHEA-COMP:10637"/>
        <dbReference type="ChEBI" id="CHEBI:78442"/>
        <dbReference type="ChEBI" id="CHEBI:78531"/>
        <dbReference type="ChEBI" id="CHEBI:78597"/>
        <dbReference type="ChEBI" id="CHEBI:83561"/>
        <dbReference type="EC" id="2.3.2.6"/>
    </reaction>
</comment>
<comment type="subcellular location">
    <subcellularLocation>
        <location evidence="1">Cytoplasm</location>
    </subcellularLocation>
</comment>
<comment type="similarity">
    <text evidence="1">Belongs to the L/F-transferase family.</text>
</comment>
<organism>
    <name type="scientific">Sinorhizobium fredii (strain NBRC 101917 / NGR234)</name>
    <dbReference type="NCBI Taxonomy" id="394"/>
    <lineage>
        <taxon>Bacteria</taxon>
        <taxon>Pseudomonadati</taxon>
        <taxon>Pseudomonadota</taxon>
        <taxon>Alphaproteobacteria</taxon>
        <taxon>Hyphomicrobiales</taxon>
        <taxon>Rhizobiaceae</taxon>
        <taxon>Sinorhizobium/Ensifer group</taxon>
        <taxon>Sinorhizobium</taxon>
    </lineage>
</organism>
<gene>
    <name evidence="1" type="primary">aat</name>
    <name type="ordered locus">NGR_c11060</name>
</gene>
<reference key="1">
    <citation type="journal article" date="2009" name="Appl. Environ. Microbiol.">
        <title>Rhizobium sp. strain NGR234 possesses a remarkable number of secretion systems.</title>
        <authorList>
            <person name="Schmeisser C."/>
            <person name="Liesegang H."/>
            <person name="Krysciak D."/>
            <person name="Bakkou N."/>
            <person name="Le Quere A."/>
            <person name="Wollherr A."/>
            <person name="Heinemeyer I."/>
            <person name="Morgenstern B."/>
            <person name="Pommerening-Roeser A."/>
            <person name="Flores M."/>
            <person name="Palacios R."/>
            <person name="Brenner S."/>
            <person name="Gottschalk G."/>
            <person name="Schmitz R.A."/>
            <person name="Broughton W.J."/>
            <person name="Perret X."/>
            <person name="Strittmatter A.W."/>
            <person name="Streit W.R."/>
        </authorList>
    </citation>
    <scope>NUCLEOTIDE SEQUENCE [LARGE SCALE GENOMIC DNA]</scope>
    <source>
        <strain>NBRC 101917 / NGR234</strain>
    </source>
</reference>
<protein>
    <recommendedName>
        <fullName evidence="1">Leucyl/phenylalanyl-tRNA--protein transferase</fullName>
        <ecNumber evidence="1">2.3.2.6</ecNumber>
    </recommendedName>
    <alternativeName>
        <fullName evidence="1">L/F-transferase</fullName>
    </alternativeName>
    <alternativeName>
        <fullName evidence="1">Leucyltransferase</fullName>
    </alternativeName>
    <alternativeName>
        <fullName evidence="1">Phenyalanyltransferase</fullName>
    </alternativeName>
</protein>
<keyword id="KW-0012">Acyltransferase</keyword>
<keyword id="KW-0963">Cytoplasm</keyword>
<keyword id="KW-1185">Reference proteome</keyword>
<keyword id="KW-0808">Transferase</keyword>
<sequence>MKGSRSKQPEITPDMLLRAYSIGLFPMADSANDPELFWVEPEIRGVLPLDRFHVSHSLAKRIRKRPYEIRFDTAFEAVIEGCAKPAPGRPTTWINDKIRSLYAALHRMGYAHSVEAWEGDRLVGGLYGVSLGAAFFGESMFSLRTDASKICLVHLVERLRARHFQLLDTQFTTEHLKSFGAVDVPKAEYDLLLARAIASPNLEF</sequence>
<accession>C3MAB3</accession>
<evidence type="ECO:0000255" key="1">
    <source>
        <dbReference type="HAMAP-Rule" id="MF_00688"/>
    </source>
</evidence>
<name>LFTR_SINFN</name>
<dbReference type="EC" id="2.3.2.6" evidence="1"/>
<dbReference type="EMBL" id="CP001389">
    <property type="protein sequence ID" value="ACP24892.1"/>
    <property type="molecule type" value="Genomic_DNA"/>
</dbReference>
<dbReference type="RefSeq" id="WP_012707675.1">
    <property type="nucleotide sequence ID" value="NC_012587.1"/>
</dbReference>
<dbReference type="RefSeq" id="YP_002825645.1">
    <property type="nucleotide sequence ID" value="NC_012587.1"/>
</dbReference>
<dbReference type="SMR" id="C3MAB3"/>
<dbReference type="STRING" id="394.NGR_c11060"/>
<dbReference type="KEGG" id="rhi:NGR_c11060"/>
<dbReference type="PATRIC" id="fig|394.7.peg.3933"/>
<dbReference type="eggNOG" id="COG2360">
    <property type="taxonomic scope" value="Bacteria"/>
</dbReference>
<dbReference type="HOGENOM" id="CLU_075045_1_1_5"/>
<dbReference type="OrthoDB" id="9790282at2"/>
<dbReference type="Proteomes" id="UP000001054">
    <property type="component" value="Chromosome"/>
</dbReference>
<dbReference type="GO" id="GO:0005737">
    <property type="term" value="C:cytoplasm"/>
    <property type="evidence" value="ECO:0007669"/>
    <property type="project" value="UniProtKB-SubCell"/>
</dbReference>
<dbReference type="GO" id="GO:0008914">
    <property type="term" value="F:leucyl-tRNA--protein transferase activity"/>
    <property type="evidence" value="ECO:0007669"/>
    <property type="project" value="UniProtKB-UniRule"/>
</dbReference>
<dbReference type="GO" id="GO:0030163">
    <property type="term" value="P:protein catabolic process"/>
    <property type="evidence" value="ECO:0007669"/>
    <property type="project" value="UniProtKB-UniRule"/>
</dbReference>
<dbReference type="FunFam" id="3.40.630.70:FF:000001">
    <property type="entry name" value="Leucyl/phenylalanyl-tRNA--protein transferase"/>
    <property type="match status" value="1"/>
</dbReference>
<dbReference type="Gene3D" id="3.40.630.70">
    <property type="entry name" value="Leucyl/phenylalanyl-tRNA-protein transferase, C-terminal domain"/>
    <property type="match status" value="1"/>
</dbReference>
<dbReference type="HAMAP" id="MF_00688">
    <property type="entry name" value="Leu_Phe_trans"/>
    <property type="match status" value="1"/>
</dbReference>
<dbReference type="InterPro" id="IPR016181">
    <property type="entry name" value="Acyl_CoA_acyltransferase"/>
</dbReference>
<dbReference type="InterPro" id="IPR004616">
    <property type="entry name" value="Leu/Phe-tRNA_Trfase"/>
</dbReference>
<dbReference type="InterPro" id="IPR042203">
    <property type="entry name" value="Leu/Phe-tRNA_Trfase_C"/>
</dbReference>
<dbReference type="NCBIfam" id="TIGR00667">
    <property type="entry name" value="aat"/>
    <property type="match status" value="1"/>
</dbReference>
<dbReference type="PANTHER" id="PTHR30098">
    <property type="entry name" value="LEUCYL/PHENYLALANYL-TRNA--PROTEIN TRANSFERASE"/>
    <property type="match status" value="1"/>
</dbReference>
<dbReference type="PANTHER" id="PTHR30098:SF2">
    <property type="entry name" value="LEUCYL_PHENYLALANYL-TRNA--PROTEIN TRANSFERASE"/>
    <property type="match status" value="1"/>
</dbReference>
<dbReference type="Pfam" id="PF03588">
    <property type="entry name" value="Leu_Phe_trans"/>
    <property type="match status" value="1"/>
</dbReference>
<dbReference type="SUPFAM" id="SSF55729">
    <property type="entry name" value="Acyl-CoA N-acyltransferases (Nat)"/>
    <property type="match status" value="1"/>
</dbReference>
<feature type="chain" id="PRO_1000147793" description="Leucyl/phenylalanyl-tRNA--protein transferase">
    <location>
        <begin position="1"/>
        <end position="204"/>
    </location>
</feature>